<keyword id="KW-0963">Cytoplasm</keyword>
<keyword id="KW-0227">DNA damage</keyword>
<keyword id="KW-0233">DNA recombination</keyword>
<keyword id="KW-0234">DNA repair</keyword>
<keyword id="KW-0539">Nucleus</keyword>
<keyword id="KW-0597">Phosphoprotein</keyword>
<dbReference type="EMBL" id="AAFW02000167">
    <property type="protein sequence ID" value="EDN59675.1"/>
    <property type="molecule type" value="Genomic_DNA"/>
</dbReference>
<dbReference type="SMR" id="A7A134"/>
<dbReference type="HOGENOM" id="CLU_022388_0_0_1"/>
<dbReference type="Proteomes" id="UP000007060">
    <property type="component" value="Unassembled WGS sequence"/>
</dbReference>
<dbReference type="GO" id="GO:0005737">
    <property type="term" value="C:cytoplasm"/>
    <property type="evidence" value="ECO:0007669"/>
    <property type="project" value="UniProtKB-SubCell"/>
</dbReference>
<dbReference type="GO" id="GO:0033557">
    <property type="term" value="C:Slx1-Slx4 complex"/>
    <property type="evidence" value="ECO:0007669"/>
    <property type="project" value="UniProtKB-UniRule"/>
</dbReference>
<dbReference type="GO" id="GO:0017108">
    <property type="term" value="F:5'-flap endonuclease activity"/>
    <property type="evidence" value="ECO:0007669"/>
    <property type="project" value="InterPro"/>
</dbReference>
<dbReference type="GO" id="GO:0006310">
    <property type="term" value="P:DNA recombination"/>
    <property type="evidence" value="ECO:0007669"/>
    <property type="project" value="UniProtKB-UniRule"/>
</dbReference>
<dbReference type="GO" id="GO:0006281">
    <property type="term" value="P:DNA repair"/>
    <property type="evidence" value="ECO:0007669"/>
    <property type="project" value="UniProtKB-UniRule"/>
</dbReference>
<dbReference type="GO" id="GO:0006260">
    <property type="term" value="P:DNA replication"/>
    <property type="evidence" value="ECO:0007669"/>
    <property type="project" value="InterPro"/>
</dbReference>
<dbReference type="CDD" id="cd22869">
    <property type="entry name" value="SLX4_RIM2"/>
    <property type="match status" value="1"/>
</dbReference>
<dbReference type="HAMAP" id="MF_03110">
    <property type="entry name" value="Endonuc_su_Slx4"/>
    <property type="match status" value="1"/>
</dbReference>
<dbReference type="InterPro" id="IPR027784">
    <property type="entry name" value="Slx4_ascomycetes"/>
</dbReference>
<dbReference type="InterPro" id="IPR018574">
    <property type="entry name" value="Structure-sp_endonuc_su_Slx4"/>
</dbReference>
<dbReference type="Pfam" id="PF09494">
    <property type="entry name" value="Slx4"/>
    <property type="match status" value="1"/>
</dbReference>
<organism>
    <name type="scientific">Saccharomyces cerevisiae (strain YJM789)</name>
    <name type="common">Baker's yeast</name>
    <dbReference type="NCBI Taxonomy" id="307796"/>
    <lineage>
        <taxon>Eukaryota</taxon>
        <taxon>Fungi</taxon>
        <taxon>Dikarya</taxon>
        <taxon>Ascomycota</taxon>
        <taxon>Saccharomycotina</taxon>
        <taxon>Saccharomycetes</taxon>
        <taxon>Saccharomycetales</taxon>
        <taxon>Saccharomycetaceae</taxon>
        <taxon>Saccharomyces</taxon>
    </lineage>
</organism>
<accession>A7A134</accession>
<proteinExistence type="inferred from homology"/>
<comment type="function">
    <text evidence="3">Regulatory subunit that interacts with and increases the activity of different structure-specific endonucleases. Has several distinct roles in protecting genome stability by resolving diverse forms of deleterious DNA structures. Component of the SLX1-SLX4 structure-specific endonuclease that resolves DNA secondary structures generated during DNA repair and recombination. Has endonuclease activity towards branched DNA substrates, introducing single-strand cuts in duplex DNA close to junctions with ss-DNA. Has a preference for simple Y, 5'-flap and replication fork-like structures. It cleaves the strand bearing the 5'-non-homologous arm at the branch site junction and generates ligatable, nicked products from the 5'-flap or replication fork substrates. Plays a critical role in maintaining the integrity of the ribosomal DNA (rDNA) loci, where it has a role in re-starting stalled replication forks. Has Holliday junction resolvase activity in vitro. Interacts with the structure-specific RAD1-RAD10 endonuclease and promotes RAD1-RAD10-dependent 3'-non-homologous tail removal (NHTR) during repair of double-strand breaks by single-strand annealing. SLX4 also promotes recovery from DNA-alkylation-induced replisome stalling during DNA replication by facilitating the error-free mode of lesion bypass. This does not require SLX1 or RAD1-RAD10, but probably RTT107.</text>
</comment>
<comment type="subunit">
    <text evidence="3">Forms a heterodimer with SLX1. Interacts with RAD1; catalytic subunit of the RAD1-RAD10 endonuclease. Interacts with RTT107.</text>
</comment>
<comment type="subcellular location">
    <subcellularLocation>
        <location evidence="3">Nucleus</location>
    </subcellularLocation>
    <subcellularLocation>
        <location evidence="3">Cytoplasm</location>
    </subcellularLocation>
</comment>
<comment type="PTM">
    <text evidence="3">Phosphorylated by ATR (MEC1) and ATM (TEL1) upon DNA damage. This appears to be required for the function with the RAD1-RAD10 endonuclease.</text>
</comment>
<comment type="similarity">
    <text evidence="3">Belongs to the SLX4 family.</text>
</comment>
<sequence>MELQRAQRNLKFLQNEDYVNVTDQTNLNGESQNAYSLGMETQVPEMQFSLSSDDDSISTQVKSVTAQKSPITQETTKNDTERNKDVDKSCNPVSTSQPDLGESNIEENIFINTQIQSRLDDAEEETNLKLKLEKFKYSFKSSNADDTHSNANVTAKRRPAIRKANSKLKTKPKTKRDPKIIKNITDFNINNYERSRTASLLKQLSGKHKKVLDIIKTQNEGNSDKPPRARNNKGEKATFDTYSEQEWKDIMKLLLQKFPQSEETDLNEVQKFLYGSEKSSSSLDNQESSQQRLWTASQLPPELPDEAIQPEQEERIRDTQSAVNFLSLSQVMDDKSEIMKDEESIIISRGDSTSSQEYGNGLEPQQPVGNVVGEDIELAVGTRINAFSLTDYKACKPMSVEVSRRCENSTDNDYDNISIVSDTTDETSTLFPLDQYRYVFIENDERPPLATDTIGSTQFFTPNTSPLDGIIDLTQESFKAVRSLISPLKVENNKTGVTSQASNQVQVPATRTPTIIPQKNLTTTLKTEEEKNNIGSSIRVKLLQESVVKLNPKLVKHNFYRVEANDSEEEDTEFDDQFCIADIQLVDSSKISTKDSTQNPTTSNDIIDTSAASSIASPEKFCEIMMSQSMKELRQSLKTVGLKPMRTKVEIIQSLQTASQILSTANPDNKGEHGGVANFSKIEIFDHLTELIEAFPDFLERIYTFEPIPLNELIEKLFSAEPFVSQIDEMTIREWADVQGICLRNDKK</sequence>
<name>SLX4_YEAS7</name>
<protein>
    <recommendedName>
        <fullName evidence="3">Structure-specific endonuclease subunit SLX4</fullName>
    </recommendedName>
</protein>
<feature type="chain" id="PRO_0000388046" description="Structure-specific endonuclease subunit SLX4">
    <location>
        <begin position="1"/>
        <end position="748"/>
    </location>
</feature>
<feature type="region of interest" description="Disordered" evidence="4">
    <location>
        <begin position="50"/>
        <end position="102"/>
    </location>
</feature>
<feature type="region of interest" description="Disordered" evidence="4">
    <location>
        <begin position="215"/>
        <end position="236"/>
    </location>
</feature>
<feature type="region of interest" description="Disordered" evidence="4">
    <location>
        <begin position="277"/>
        <end position="303"/>
    </location>
</feature>
<feature type="compositionally biased region" description="Polar residues" evidence="4">
    <location>
        <begin position="57"/>
        <end position="75"/>
    </location>
</feature>
<feature type="compositionally biased region" description="Basic and acidic residues" evidence="4">
    <location>
        <begin position="76"/>
        <end position="88"/>
    </location>
</feature>
<feature type="compositionally biased region" description="Basic and acidic residues" evidence="4">
    <location>
        <begin position="222"/>
        <end position="236"/>
    </location>
</feature>
<feature type="compositionally biased region" description="Low complexity" evidence="4">
    <location>
        <begin position="277"/>
        <end position="291"/>
    </location>
</feature>
<feature type="modified residue" description="Phosphothreonine; by ATR and ATM" evidence="1">
    <location>
        <position position="72"/>
    </location>
</feature>
<feature type="modified residue" description="Phosphothreonine; by ATR and ATM" evidence="2">
    <location>
        <position position="113"/>
    </location>
</feature>
<feature type="modified residue" description="Phosphoserine; by ATR and ATM" evidence="1">
    <location>
        <position position="289"/>
    </location>
</feature>
<feature type="modified residue" description="Phosphothreonine; by ATR and ATM" evidence="2">
    <location>
        <position position="319"/>
    </location>
</feature>
<feature type="modified residue" description="Phosphoserine; by ATR and ATM" evidence="1">
    <location>
        <position position="329"/>
    </location>
</feature>
<feature type="modified residue" description="Phosphoserine; by ATR and ATM" evidence="2">
    <location>
        <position position="355"/>
    </location>
</feature>
<gene>
    <name evidence="3" type="primary">SLX4</name>
    <name type="ORF">SCY_3708</name>
</gene>
<evidence type="ECO:0000250" key="1">
    <source>
        <dbReference type="UniProtKB" id="Q12098"/>
    </source>
</evidence>
<evidence type="ECO:0000255" key="2"/>
<evidence type="ECO:0000255" key="3">
    <source>
        <dbReference type="HAMAP-Rule" id="MF_03110"/>
    </source>
</evidence>
<evidence type="ECO:0000256" key="4">
    <source>
        <dbReference type="SAM" id="MobiDB-lite"/>
    </source>
</evidence>
<reference key="1">
    <citation type="journal article" date="2007" name="Proc. Natl. Acad. Sci. U.S.A.">
        <title>Genome sequencing and comparative analysis of Saccharomyces cerevisiae strain YJM789.</title>
        <authorList>
            <person name="Wei W."/>
            <person name="McCusker J.H."/>
            <person name="Hyman R.W."/>
            <person name="Jones T."/>
            <person name="Ning Y."/>
            <person name="Cao Z."/>
            <person name="Gu Z."/>
            <person name="Bruno D."/>
            <person name="Miranda M."/>
            <person name="Nguyen M."/>
            <person name="Wilhelmy J."/>
            <person name="Komp C."/>
            <person name="Tamse R."/>
            <person name="Wang X."/>
            <person name="Jia P."/>
            <person name="Luedi P."/>
            <person name="Oefner P.J."/>
            <person name="David L."/>
            <person name="Dietrich F.S."/>
            <person name="Li Y."/>
            <person name="Davis R.W."/>
            <person name="Steinmetz L.M."/>
        </authorList>
    </citation>
    <scope>NUCLEOTIDE SEQUENCE [LARGE SCALE GENOMIC DNA]</scope>
    <source>
        <strain>YJM789</strain>
    </source>
</reference>